<comment type="catalytic activity">
    <reaction evidence="1">
        <text>tRNA(Gly) + glycine + ATP = glycyl-tRNA(Gly) + AMP + diphosphate</text>
        <dbReference type="Rhea" id="RHEA:16013"/>
        <dbReference type="Rhea" id="RHEA-COMP:9664"/>
        <dbReference type="Rhea" id="RHEA-COMP:9683"/>
        <dbReference type="ChEBI" id="CHEBI:30616"/>
        <dbReference type="ChEBI" id="CHEBI:33019"/>
        <dbReference type="ChEBI" id="CHEBI:57305"/>
        <dbReference type="ChEBI" id="CHEBI:78442"/>
        <dbReference type="ChEBI" id="CHEBI:78522"/>
        <dbReference type="ChEBI" id="CHEBI:456215"/>
        <dbReference type="EC" id="6.1.1.14"/>
    </reaction>
</comment>
<comment type="subunit">
    <text evidence="1">Tetramer of two alpha and two beta subunits.</text>
</comment>
<comment type="subcellular location">
    <subcellularLocation>
        <location evidence="1">Cytoplasm</location>
    </subcellularLocation>
</comment>
<comment type="similarity">
    <text evidence="1">Belongs to the class-II aminoacyl-tRNA synthetase family.</text>
</comment>
<sequence>MPNLLLELRSEEIPARMQRKAAGDLKKLVTDALVEAGLSYEGAREYWTPRRLALDIHGLTARSADVREERKGPRTDANEKAIEGFLRGAGLSSVSEAQVVSDPKKGDFYVAVISKPGRATEEIVTDVMPGIIRDFPWPKSMRWGKASSKPGALRWVRPLQSIVCTFGPEHEETTVIPFEIDGITASNITYGHRFHAPEPITVRRFDDYAANLEKAKVILDAERRKDIILHDARDIAFANGLELVEDEGLLEEVSGLVEWPQVLMGSFEEDYLSIPSEIIRLTIKTNQKCFVTRPQGGETLSNKFILVSNIQASDGGKEIVHGNGKVVRARLSDALHFWKRDQGNLPDLETLTASAAKFGLDINKPLDQRMAKLDALDVTFHAKLGTQGARVARIRTLAKQLADITGADAALIDRAAVLAKADLRTEAVGEFPELQGLMGRKYAALQGEDASVAAALEDHYKPQGPSDRVPEDRVAITIALADKLDTLIGFWAIDEKPTGSKDPFALRRAALGVVRILLERKVRLPLLTTTRDIDLLSFFHDRLKVYLRDQGARHDLIDAVLTPDADDLLMVARRVEALTAFITSEDGKNLLAGTKRATQLLAAEEKKGTVIADGVSQALLKLDAEKELFAAISGASKDASDAVAGEDFRSAMEALSKLRGPVDRFFEDVLVNDEDAAIRANRLALLRLIREATGTVADFSKISG</sequence>
<keyword id="KW-0030">Aminoacyl-tRNA synthetase</keyword>
<keyword id="KW-0067">ATP-binding</keyword>
<keyword id="KW-0963">Cytoplasm</keyword>
<keyword id="KW-0436">Ligase</keyword>
<keyword id="KW-0547">Nucleotide-binding</keyword>
<keyword id="KW-0648">Protein biosynthesis</keyword>
<protein>
    <recommendedName>
        <fullName evidence="1">Glycine--tRNA ligase beta subunit</fullName>
        <ecNumber evidence="1">6.1.1.14</ecNumber>
    </recommendedName>
    <alternativeName>
        <fullName evidence="1">Glycyl-tRNA synthetase beta subunit</fullName>
        <shortName evidence="1">GlyRS</shortName>
    </alternativeName>
</protein>
<accession>Q1MKQ6</accession>
<gene>
    <name evidence="1" type="primary">glyS</name>
    <name type="ordered locus">RL0951</name>
</gene>
<organism>
    <name type="scientific">Rhizobium johnstonii (strain DSM 114642 / LMG 32736 / 3841)</name>
    <name type="common">Rhizobium leguminosarum bv. viciae</name>
    <dbReference type="NCBI Taxonomy" id="216596"/>
    <lineage>
        <taxon>Bacteria</taxon>
        <taxon>Pseudomonadati</taxon>
        <taxon>Pseudomonadota</taxon>
        <taxon>Alphaproteobacteria</taxon>
        <taxon>Hyphomicrobiales</taxon>
        <taxon>Rhizobiaceae</taxon>
        <taxon>Rhizobium/Agrobacterium group</taxon>
        <taxon>Rhizobium</taxon>
        <taxon>Rhizobium johnstonii</taxon>
    </lineage>
</organism>
<proteinExistence type="inferred from homology"/>
<dbReference type="EC" id="6.1.1.14" evidence="1"/>
<dbReference type="EMBL" id="AM236080">
    <property type="protein sequence ID" value="CAK06448.1"/>
    <property type="molecule type" value="Genomic_DNA"/>
</dbReference>
<dbReference type="RefSeq" id="WP_011650690.1">
    <property type="nucleotide sequence ID" value="NC_008380.1"/>
</dbReference>
<dbReference type="SMR" id="Q1MKQ6"/>
<dbReference type="EnsemblBacteria" id="CAK06448">
    <property type="protein sequence ID" value="CAK06448"/>
    <property type="gene ID" value="RL0951"/>
</dbReference>
<dbReference type="KEGG" id="rle:RL0951"/>
<dbReference type="eggNOG" id="COG0751">
    <property type="taxonomic scope" value="Bacteria"/>
</dbReference>
<dbReference type="HOGENOM" id="CLU_007220_2_1_5"/>
<dbReference type="Proteomes" id="UP000006575">
    <property type="component" value="Chromosome"/>
</dbReference>
<dbReference type="GO" id="GO:0005829">
    <property type="term" value="C:cytosol"/>
    <property type="evidence" value="ECO:0007669"/>
    <property type="project" value="TreeGrafter"/>
</dbReference>
<dbReference type="GO" id="GO:0004814">
    <property type="term" value="F:arginine-tRNA ligase activity"/>
    <property type="evidence" value="ECO:0007669"/>
    <property type="project" value="InterPro"/>
</dbReference>
<dbReference type="GO" id="GO:0005524">
    <property type="term" value="F:ATP binding"/>
    <property type="evidence" value="ECO:0007669"/>
    <property type="project" value="UniProtKB-UniRule"/>
</dbReference>
<dbReference type="GO" id="GO:0004820">
    <property type="term" value="F:glycine-tRNA ligase activity"/>
    <property type="evidence" value="ECO:0007669"/>
    <property type="project" value="UniProtKB-UniRule"/>
</dbReference>
<dbReference type="GO" id="GO:0006420">
    <property type="term" value="P:arginyl-tRNA aminoacylation"/>
    <property type="evidence" value="ECO:0007669"/>
    <property type="project" value="InterPro"/>
</dbReference>
<dbReference type="GO" id="GO:0006426">
    <property type="term" value="P:glycyl-tRNA aminoacylation"/>
    <property type="evidence" value="ECO:0007669"/>
    <property type="project" value="UniProtKB-UniRule"/>
</dbReference>
<dbReference type="HAMAP" id="MF_00255">
    <property type="entry name" value="Gly_tRNA_synth_beta"/>
    <property type="match status" value="1"/>
</dbReference>
<dbReference type="InterPro" id="IPR008909">
    <property type="entry name" value="DALR_anticod-bd"/>
</dbReference>
<dbReference type="InterPro" id="IPR015944">
    <property type="entry name" value="Gly-tRNA-synth_bsu"/>
</dbReference>
<dbReference type="InterPro" id="IPR006194">
    <property type="entry name" value="Gly-tRNA-synth_heterodimer"/>
</dbReference>
<dbReference type="NCBIfam" id="TIGR00211">
    <property type="entry name" value="glyS"/>
    <property type="match status" value="1"/>
</dbReference>
<dbReference type="PANTHER" id="PTHR30075:SF2">
    <property type="entry name" value="GLYCINE--TRNA LIGASE, CHLOROPLASTIC_MITOCHONDRIAL 2"/>
    <property type="match status" value="1"/>
</dbReference>
<dbReference type="PANTHER" id="PTHR30075">
    <property type="entry name" value="GLYCYL-TRNA SYNTHETASE"/>
    <property type="match status" value="1"/>
</dbReference>
<dbReference type="Pfam" id="PF05746">
    <property type="entry name" value="DALR_1"/>
    <property type="match status" value="1"/>
</dbReference>
<dbReference type="Pfam" id="PF02092">
    <property type="entry name" value="tRNA_synt_2f"/>
    <property type="match status" value="1"/>
</dbReference>
<dbReference type="PRINTS" id="PR01045">
    <property type="entry name" value="TRNASYNTHGB"/>
</dbReference>
<dbReference type="SUPFAM" id="SSF109604">
    <property type="entry name" value="HD-domain/PDEase-like"/>
    <property type="match status" value="1"/>
</dbReference>
<dbReference type="PROSITE" id="PS50861">
    <property type="entry name" value="AA_TRNA_LIGASE_II_GLYAB"/>
    <property type="match status" value="1"/>
</dbReference>
<name>SYGB_RHIJ3</name>
<evidence type="ECO:0000255" key="1">
    <source>
        <dbReference type="HAMAP-Rule" id="MF_00255"/>
    </source>
</evidence>
<reference key="1">
    <citation type="journal article" date="2006" name="Genome Biol.">
        <title>The genome of Rhizobium leguminosarum has recognizable core and accessory components.</title>
        <authorList>
            <person name="Young J.P.W."/>
            <person name="Crossman L.C."/>
            <person name="Johnston A.W.B."/>
            <person name="Thomson N.R."/>
            <person name="Ghazoui Z.F."/>
            <person name="Hull K.H."/>
            <person name="Wexler M."/>
            <person name="Curson A.R.J."/>
            <person name="Todd J.D."/>
            <person name="Poole P.S."/>
            <person name="Mauchline T.H."/>
            <person name="East A.K."/>
            <person name="Quail M.A."/>
            <person name="Churcher C."/>
            <person name="Arrowsmith C."/>
            <person name="Cherevach I."/>
            <person name="Chillingworth T."/>
            <person name="Clarke K."/>
            <person name="Cronin A."/>
            <person name="Davis P."/>
            <person name="Fraser A."/>
            <person name="Hance Z."/>
            <person name="Hauser H."/>
            <person name="Jagels K."/>
            <person name="Moule S."/>
            <person name="Mungall K."/>
            <person name="Norbertczak H."/>
            <person name="Rabbinowitsch E."/>
            <person name="Sanders M."/>
            <person name="Simmonds M."/>
            <person name="Whitehead S."/>
            <person name="Parkhill J."/>
        </authorList>
    </citation>
    <scope>NUCLEOTIDE SEQUENCE [LARGE SCALE GENOMIC DNA]</scope>
    <source>
        <strain>DSM 114642 / LMG 32736 / 3841</strain>
    </source>
</reference>
<feature type="chain" id="PRO_1000101321" description="Glycine--tRNA ligase beta subunit">
    <location>
        <begin position="1"/>
        <end position="704"/>
    </location>
</feature>